<name>FAS3_DROME</name>
<comment type="function">
    <text evidence="4 5">Mediates cell adhesion in a Ca(2+)-independent manner (PubMed:2509076). It plays a role in axon outgrowth, guidance and fasciculation of the developing nervous system (PubMed:2509076). Function in neurons is essential for adult survival, and is important for climbing behavior and activity (PubMed:37041188).</text>
</comment>
<comment type="subcellular location">
    <subcellularLocation>
        <location>Membrane</location>
        <topology>Single-pass type I membrane protein</topology>
    </subcellularLocation>
</comment>
<comment type="alternative products">
    <event type="alternative splicing"/>
    <isoform>
        <id>P15278-1</id>
        <name>A</name>
        <sequence type="displayed"/>
    </isoform>
    <isoform>
        <id>P15278-2</id>
        <name>B</name>
        <sequence type="described" ref="VSP_007949 VSP_007950"/>
    </isoform>
</comment>
<comment type="tissue specificity">
    <text>Expressed on different subsets of axon bundles (fascicles) in insect embryos.</text>
</comment>
<comment type="disruption phenotype">
    <text evidence="5">RNAi-mediated knockdown in the neurons of adult males, significantly reduces survival to 57 percent (PubMed:37041188). Adult survival begins to decrease from approximately day 14 post eclosion (PubMed:37041188). Pan-neuronal or glutamatergic neuron-specific RNAi-mediated knockdown decreases adult climbing behavior (PubMed:37041188). Glutamatergic neuron-specific RNAi-mediated knockdown also decreases activity throughout the day (during both light and dark cycles) (PubMed:37041188).</text>
</comment>
<keyword id="KW-0025">Alternative splicing</keyword>
<keyword id="KW-0130">Cell adhesion</keyword>
<keyword id="KW-0217">Developmental protein</keyword>
<keyword id="KW-0221">Differentiation</keyword>
<keyword id="KW-1015">Disulfide bond</keyword>
<keyword id="KW-0325">Glycoprotein</keyword>
<keyword id="KW-0393">Immunoglobulin domain</keyword>
<keyword id="KW-0472">Membrane</keyword>
<keyword id="KW-0524">Neurogenesis</keyword>
<keyword id="KW-0597">Phosphoprotein</keyword>
<keyword id="KW-0873">Pyrrolidone carboxylic acid</keyword>
<keyword id="KW-1185">Reference proteome</keyword>
<keyword id="KW-0677">Repeat</keyword>
<keyword id="KW-0732">Signal</keyword>
<keyword id="KW-0812">Transmembrane</keyword>
<keyword id="KW-1133">Transmembrane helix</keyword>
<sequence>MSRIVFICLAAILTDALTWAQVNVEPNTALLNEGDRTELLCRYGRSINYCRIEIPGEQKVLNLSPEWSKTPGFTYFGAGLTAGQCGVSIERVKASNNGQVKCSLGVEGEELSGTIDLVVALRPQQPIIELLSRPNREGYFNEGTEFRARCSVRDGRPPANISWYIDNMPANKRTTPLEVMSSTNDNVELSTSVQEIQWHLSPEDSNRKLVCRSHHQTDRESVPPQEAAYIINVRYAPVHQPDAAVYGLYLEHTAIVNITIRASPQPKIEWTIDGAIVGQGRTDGRYSAYEPQYLGNDEYNVTLAIAGLTLEDTTKIYNLRASNELGLTDYQVRISSSSKPPSSSLDVAAIVGIVVAVAVLVLVVLLIVFARATGRWCFGGKSIKTPTNETSDTESADIKATSTATATTTMGGVGVSAEEEETVNEQESPQEQQQQQQKKAKRLPAFAAAILRRFNEKDSRKYKDNQESLNIVEGSVQEIPATNNAIDGNDNEPKAIVWQSTSPVWTFK</sequence>
<feature type="signal peptide">
    <location>
        <begin position="1"/>
        <end position="20"/>
    </location>
</feature>
<feature type="chain" id="PRO_0000014760" description="Fasciclin-3">
    <location>
        <begin position="21"/>
        <end position="508"/>
    </location>
</feature>
<feature type="topological domain" description="Extracellular" evidence="1">
    <location>
        <begin position="21"/>
        <end position="346"/>
    </location>
</feature>
<feature type="transmembrane region" description="Helical" evidence="1">
    <location>
        <begin position="347"/>
        <end position="370"/>
    </location>
</feature>
<feature type="topological domain" description="Cytoplasmic" evidence="1">
    <location>
        <begin position="371"/>
        <end position="508"/>
    </location>
</feature>
<feature type="domain" description="Ig-like V-type">
    <location>
        <begin position="44"/>
        <end position="106"/>
    </location>
</feature>
<feature type="domain" description="Ig-like C2-type 1">
    <location>
        <begin position="126"/>
        <end position="223"/>
    </location>
</feature>
<feature type="domain" description="Ig-like C2-type 2">
    <location>
        <begin position="236"/>
        <end position="310"/>
    </location>
</feature>
<feature type="region of interest" description="Disordered" evidence="3">
    <location>
        <begin position="381"/>
        <end position="439"/>
    </location>
</feature>
<feature type="compositionally biased region" description="Low complexity" evidence="3">
    <location>
        <begin position="400"/>
        <end position="409"/>
    </location>
</feature>
<feature type="compositionally biased region" description="Low complexity" evidence="3">
    <location>
        <begin position="425"/>
        <end position="437"/>
    </location>
</feature>
<feature type="modified residue" description="Pyrrolidone carboxylic acid" evidence="7">
    <location>
        <position position="21"/>
    </location>
</feature>
<feature type="modified residue" description="Phosphoserine" evidence="1">
    <location>
        <position position="382"/>
    </location>
</feature>
<feature type="modified residue" description="Phosphoserine" evidence="1">
    <location>
        <position position="459"/>
    </location>
</feature>
<feature type="glycosylation site" description="N-linked (GlcNAc...) asparagine" evidence="1">
    <location>
        <position position="160"/>
    </location>
</feature>
<feature type="glycosylation site" description="N-linked (GlcNAc...) asparagine" evidence="1">
    <location>
        <position position="257"/>
    </location>
</feature>
<feature type="glycosylation site" description="N-linked (GlcNAc...) asparagine" evidence="1">
    <location>
        <position position="300"/>
    </location>
</feature>
<feature type="disulfide bond" evidence="2">
    <location>
        <begin position="150"/>
        <end position="211"/>
    </location>
</feature>
<feature type="splice variant" id="VSP_007949" description="In isoform B." evidence="6">
    <original>SDTESADIKAT</original>
    <variation>KTNNSSMLNLY</variation>
    <location>
        <begin position="391"/>
        <end position="401"/>
    </location>
</feature>
<feature type="splice variant" id="VSP_007950" description="In isoform B." evidence="6">
    <location>
        <begin position="402"/>
        <end position="508"/>
    </location>
</feature>
<protein>
    <recommendedName>
        <fullName>Fasciclin-3</fullName>
    </recommendedName>
    <alternativeName>
        <fullName>Fasciclin III</fullName>
        <shortName>FAS III</shortName>
    </alternativeName>
</protein>
<organism>
    <name type="scientific">Drosophila melanogaster</name>
    <name type="common">Fruit fly</name>
    <dbReference type="NCBI Taxonomy" id="7227"/>
    <lineage>
        <taxon>Eukaryota</taxon>
        <taxon>Metazoa</taxon>
        <taxon>Ecdysozoa</taxon>
        <taxon>Arthropoda</taxon>
        <taxon>Hexapoda</taxon>
        <taxon>Insecta</taxon>
        <taxon>Pterygota</taxon>
        <taxon>Neoptera</taxon>
        <taxon>Endopterygota</taxon>
        <taxon>Diptera</taxon>
        <taxon>Brachycera</taxon>
        <taxon>Muscomorpha</taxon>
        <taxon>Ephydroidea</taxon>
        <taxon>Drosophilidae</taxon>
        <taxon>Drosophila</taxon>
        <taxon>Sophophora</taxon>
    </lineage>
</organism>
<accession>P15278</accession>
<accession>Q8SXX9</accession>
<accession>Q9VJ89</accession>
<evidence type="ECO:0000255" key="1"/>
<evidence type="ECO:0000255" key="2">
    <source>
        <dbReference type="PROSITE-ProRule" id="PRU00114"/>
    </source>
</evidence>
<evidence type="ECO:0000256" key="3">
    <source>
        <dbReference type="SAM" id="MobiDB-lite"/>
    </source>
</evidence>
<evidence type="ECO:0000269" key="4">
    <source>
    </source>
</evidence>
<evidence type="ECO:0000269" key="5">
    <source>
    </source>
</evidence>
<evidence type="ECO:0000303" key="6">
    <source>
    </source>
</evidence>
<evidence type="ECO:0000305" key="7">
    <source>
    </source>
</evidence>
<proteinExistence type="evidence at protein level"/>
<dbReference type="EMBL" id="M27813">
    <property type="protein sequence ID" value="AAA28532.1"/>
    <property type="molecule type" value="mRNA"/>
</dbReference>
<dbReference type="EMBL" id="AE014134">
    <property type="protein sequence ID" value="AAF53665.2"/>
    <property type="molecule type" value="Genomic_DNA"/>
</dbReference>
<dbReference type="EMBL" id="AE014134">
    <property type="protein sequence ID" value="AAN11002.1"/>
    <property type="molecule type" value="Genomic_DNA"/>
</dbReference>
<dbReference type="EMBL" id="AY075516">
    <property type="protein sequence ID" value="AAL68324.1"/>
    <property type="molecule type" value="mRNA"/>
</dbReference>
<dbReference type="PIR" id="A33378">
    <property type="entry name" value="A33378"/>
</dbReference>
<dbReference type="RefSeq" id="NP_001286039.1">
    <molecule id="P15278-2"/>
    <property type="nucleotide sequence ID" value="NM_001299110.1"/>
</dbReference>
<dbReference type="RefSeq" id="NP_724106.1">
    <molecule id="P15278-2"/>
    <property type="nucleotide sequence ID" value="NM_165249.4"/>
</dbReference>
<dbReference type="RefSeq" id="NP_724107.1">
    <molecule id="P15278-1"/>
    <property type="nucleotide sequence ID" value="NM_165250.4"/>
</dbReference>
<dbReference type="BioGRID" id="61092">
    <property type="interactions" value="13"/>
</dbReference>
<dbReference type="DIP" id="DIP-21336N"/>
<dbReference type="FunCoup" id="P15278">
    <property type="interactions" value="54"/>
</dbReference>
<dbReference type="STRING" id="7227.FBpp0111717"/>
<dbReference type="TCDB" id="1.H.2.1.1">
    <property type="family name" value="the invertebrate pmp22-claudin (claudin2) family"/>
</dbReference>
<dbReference type="GlyCosmos" id="P15278">
    <property type="glycosylation" value="3 sites, No reported glycans"/>
</dbReference>
<dbReference type="GlyGen" id="P15278">
    <property type="glycosylation" value="3 sites"/>
</dbReference>
<dbReference type="SwissPalm" id="P15278"/>
<dbReference type="PaxDb" id="7227-FBpp0111717"/>
<dbReference type="DNASU" id="35097"/>
<dbReference type="EnsemblMetazoa" id="FBtr0081051">
    <molecule id="P15278-1"/>
    <property type="protein sequence ID" value="FBpp0080604"/>
    <property type="gene ID" value="FBgn0000636"/>
</dbReference>
<dbReference type="EnsemblMetazoa" id="FBtr0081052">
    <molecule id="P15278-2"/>
    <property type="protein sequence ID" value="FBpp0080605"/>
    <property type="gene ID" value="FBgn0000636"/>
</dbReference>
<dbReference type="EnsemblMetazoa" id="FBtr0340580">
    <molecule id="P15278-2"/>
    <property type="protein sequence ID" value="FBpp0309467"/>
    <property type="gene ID" value="FBgn0000636"/>
</dbReference>
<dbReference type="GeneID" id="35097"/>
<dbReference type="KEGG" id="dme:Dmel_CG5803"/>
<dbReference type="AGR" id="FB:FBgn0000636"/>
<dbReference type="CTD" id="35097"/>
<dbReference type="FlyBase" id="FBgn0000636">
    <property type="gene designation" value="Fas3"/>
</dbReference>
<dbReference type="VEuPathDB" id="VectorBase:FBgn0000636"/>
<dbReference type="eggNOG" id="ENOG502QWSY">
    <property type="taxonomic scope" value="Eukaryota"/>
</dbReference>
<dbReference type="GeneTree" id="ENSGT00940000169499"/>
<dbReference type="InParanoid" id="P15278"/>
<dbReference type="OrthoDB" id="6345017at2759"/>
<dbReference type="PhylomeDB" id="P15278"/>
<dbReference type="Reactome" id="R-DME-418990">
    <property type="pathway name" value="Adherens junctions interactions"/>
</dbReference>
<dbReference type="Reactome" id="R-DME-420597">
    <property type="pathway name" value="Nectin/Necl trans heterodimerization"/>
</dbReference>
<dbReference type="BioGRID-ORCS" id="35097">
    <property type="hits" value="0 hits in 1 CRISPR screen"/>
</dbReference>
<dbReference type="ChiTaRS" id="Fas3">
    <property type="organism name" value="fly"/>
</dbReference>
<dbReference type="GenomeRNAi" id="35097"/>
<dbReference type="PRO" id="PR:P15278"/>
<dbReference type="Proteomes" id="UP000000803">
    <property type="component" value="Chromosome 2L"/>
</dbReference>
<dbReference type="Bgee" id="FBgn0000636">
    <property type="expression patterns" value="Expressed in polar follicle cell (Drosophila) in ovary and 289 other cell types or tissues"/>
</dbReference>
<dbReference type="ExpressionAtlas" id="P15278">
    <property type="expression patterns" value="baseline and differential"/>
</dbReference>
<dbReference type="GO" id="GO:0005912">
    <property type="term" value="C:adherens junction"/>
    <property type="evidence" value="ECO:0000318"/>
    <property type="project" value="GO_Central"/>
</dbReference>
<dbReference type="GO" id="GO:0031594">
    <property type="term" value="C:neuromuscular junction"/>
    <property type="evidence" value="ECO:0000314"/>
    <property type="project" value="FlyBase"/>
</dbReference>
<dbReference type="GO" id="GO:0005886">
    <property type="term" value="C:plasma membrane"/>
    <property type="evidence" value="ECO:0000314"/>
    <property type="project" value="UniProtKB"/>
</dbReference>
<dbReference type="GO" id="GO:0055037">
    <property type="term" value="C:recycling endosome"/>
    <property type="evidence" value="ECO:0000314"/>
    <property type="project" value="FlyBase"/>
</dbReference>
<dbReference type="GO" id="GO:0005920">
    <property type="term" value="C:smooth septate junction"/>
    <property type="evidence" value="ECO:0000314"/>
    <property type="project" value="FlyBase"/>
</dbReference>
<dbReference type="GO" id="GO:0007411">
    <property type="term" value="P:axon guidance"/>
    <property type="evidence" value="ECO:0000270"/>
    <property type="project" value="FlyBase"/>
</dbReference>
<dbReference type="GO" id="GO:0007413">
    <property type="term" value="P:axonal fasciculation"/>
    <property type="evidence" value="ECO:0000304"/>
    <property type="project" value="FlyBase"/>
</dbReference>
<dbReference type="GO" id="GO:0007157">
    <property type="term" value="P:heterophilic cell-cell adhesion via plasma membrane cell adhesion molecules"/>
    <property type="evidence" value="ECO:0000318"/>
    <property type="project" value="GO_Central"/>
</dbReference>
<dbReference type="GO" id="GO:0007156">
    <property type="term" value="P:homophilic cell adhesion via plasma membrane adhesion molecules"/>
    <property type="evidence" value="ECO:0000318"/>
    <property type="project" value="GO_Central"/>
</dbReference>
<dbReference type="GO" id="GO:0008039">
    <property type="term" value="P:synaptic target recognition"/>
    <property type="evidence" value="ECO:0000314"/>
    <property type="project" value="FlyBase"/>
</dbReference>
<dbReference type="Gene3D" id="2.60.40.10">
    <property type="entry name" value="Immunoglobulins"/>
    <property type="match status" value="2"/>
</dbReference>
<dbReference type="InterPro" id="IPR013162">
    <property type="entry name" value="CD80_C2-set"/>
</dbReference>
<dbReference type="InterPro" id="IPR007110">
    <property type="entry name" value="Ig-like_dom"/>
</dbReference>
<dbReference type="InterPro" id="IPR036179">
    <property type="entry name" value="Ig-like_dom_sf"/>
</dbReference>
<dbReference type="InterPro" id="IPR013783">
    <property type="entry name" value="Ig-like_fold"/>
</dbReference>
<dbReference type="InterPro" id="IPR051427">
    <property type="entry name" value="Nectin/Nectin-like"/>
</dbReference>
<dbReference type="PANTHER" id="PTHR23277:SF108">
    <property type="entry name" value="FASCICLIN-3"/>
    <property type="match status" value="1"/>
</dbReference>
<dbReference type="PANTHER" id="PTHR23277">
    <property type="entry name" value="NECTIN-RELATED"/>
    <property type="match status" value="1"/>
</dbReference>
<dbReference type="Pfam" id="PF08205">
    <property type="entry name" value="C2-set_2"/>
    <property type="match status" value="1"/>
</dbReference>
<dbReference type="SUPFAM" id="SSF48726">
    <property type="entry name" value="Immunoglobulin"/>
    <property type="match status" value="2"/>
</dbReference>
<dbReference type="PROSITE" id="PS50835">
    <property type="entry name" value="IG_LIKE"/>
    <property type="match status" value="1"/>
</dbReference>
<reference key="1">
    <citation type="journal article" date="1989" name="Cell">
        <title>Fasciclin III: a novel homophilic adhesion molecule in Drosophila.</title>
        <authorList>
            <person name="Snow P.M."/>
            <person name="Bieber A.J."/>
            <person name="Goodman C.S."/>
        </authorList>
    </citation>
    <scope>NUCLEOTIDE SEQUENCE [MRNA] (ISOFORM A)</scope>
    <scope>FUNCTION</scope>
    <scope>PYROGLUTAMATE FORMATION AT GLN-21</scope>
</reference>
<reference key="2">
    <citation type="journal article" date="2000" name="Science">
        <title>The genome sequence of Drosophila melanogaster.</title>
        <authorList>
            <person name="Adams M.D."/>
            <person name="Celniker S.E."/>
            <person name="Holt R.A."/>
            <person name="Evans C.A."/>
            <person name="Gocayne J.D."/>
            <person name="Amanatides P.G."/>
            <person name="Scherer S.E."/>
            <person name="Li P.W."/>
            <person name="Hoskins R.A."/>
            <person name="Galle R.F."/>
            <person name="George R.A."/>
            <person name="Lewis S.E."/>
            <person name="Richards S."/>
            <person name="Ashburner M."/>
            <person name="Henderson S.N."/>
            <person name="Sutton G.G."/>
            <person name="Wortman J.R."/>
            <person name="Yandell M.D."/>
            <person name="Zhang Q."/>
            <person name="Chen L.X."/>
            <person name="Brandon R.C."/>
            <person name="Rogers Y.-H.C."/>
            <person name="Blazej R.G."/>
            <person name="Champe M."/>
            <person name="Pfeiffer B.D."/>
            <person name="Wan K.H."/>
            <person name="Doyle C."/>
            <person name="Baxter E.G."/>
            <person name="Helt G."/>
            <person name="Nelson C.R."/>
            <person name="Miklos G.L.G."/>
            <person name="Abril J.F."/>
            <person name="Agbayani A."/>
            <person name="An H.-J."/>
            <person name="Andrews-Pfannkoch C."/>
            <person name="Baldwin D."/>
            <person name="Ballew R.M."/>
            <person name="Basu A."/>
            <person name="Baxendale J."/>
            <person name="Bayraktaroglu L."/>
            <person name="Beasley E.M."/>
            <person name="Beeson K.Y."/>
            <person name="Benos P.V."/>
            <person name="Berman B.P."/>
            <person name="Bhandari D."/>
            <person name="Bolshakov S."/>
            <person name="Borkova D."/>
            <person name="Botchan M.R."/>
            <person name="Bouck J."/>
            <person name="Brokstein P."/>
            <person name="Brottier P."/>
            <person name="Burtis K.C."/>
            <person name="Busam D.A."/>
            <person name="Butler H."/>
            <person name="Cadieu E."/>
            <person name="Center A."/>
            <person name="Chandra I."/>
            <person name="Cherry J.M."/>
            <person name="Cawley S."/>
            <person name="Dahlke C."/>
            <person name="Davenport L.B."/>
            <person name="Davies P."/>
            <person name="de Pablos B."/>
            <person name="Delcher A."/>
            <person name="Deng Z."/>
            <person name="Mays A.D."/>
            <person name="Dew I."/>
            <person name="Dietz S.M."/>
            <person name="Dodson K."/>
            <person name="Doup L.E."/>
            <person name="Downes M."/>
            <person name="Dugan-Rocha S."/>
            <person name="Dunkov B.C."/>
            <person name="Dunn P."/>
            <person name="Durbin K.J."/>
            <person name="Evangelista C.C."/>
            <person name="Ferraz C."/>
            <person name="Ferriera S."/>
            <person name="Fleischmann W."/>
            <person name="Fosler C."/>
            <person name="Gabrielian A.E."/>
            <person name="Garg N.S."/>
            <person name="Gelbart W.M."/>
            <person name="Glasser K."/>
            <person name="Glodek A."/>
            <person name="Gong F."/>
            <person name="Gorrell J.H."/>
            <person name="Gu Z."/>
            <person name="Guan P."/>
            <person name="Harris M."/>
            <person name="Harris N.L."/>
            <person name="Harvey D.A."/>
            <person name="Heiman T.J."/>
            <person name="Hernandez J.R."/>
            <person name="Houck J."/>
            <person name="Hostin D."/>
            <person name="Houston K.A."/>
            <person name="Howland T.J."/>
            <person name="Wei M.-H."/>
            <person name="Ibegwam C."/>
            <person name="Jalali M."/>
            <person name="Kalush F."/>
            <person name="Karpen G.H."/>
            <person name="Ke Z."/>
            <person name="Kennison J.A."/>
            <person name="Ketchum K.A."/>
            <person name="Kimmel B.E."/>
            <person name="Kodira C.D."/>
            <person name="Kraft C.L."/>
            <person name="Kravitz S."/>
            <person name="Kulp D."/>
            <person name="Lai Z."/>
            <person name="Lasko P."/>
            <person name="Lei Y."/>
            <person name="Levitsky A.A."/>
            <person name="Li J.H."/>
            <person name="Li Z."/>
            <person name="Liang Y."/>
            <person name="Lin X."/>
            <person name="Liu X."/>
            <person name="Mattei B."/>
            <person name="McIntosh T.C."/>
            <person name="McLeod M.P."/>
            <person name="McPherson D."/>
            <person name="Merkulov G."/>
            <person name="Milshina N.V."/>
            <person name="Mobarry C."/>
            <person name="Morris J."/>
            <person name="Moshrefi A."/>
            <person name="Mount S.M."/>
            <person name="Moy M."/>
            <person name="Murphy B."/>
            <person name="Murphy L."/>
            <person name="Muzny D.M."/>
            <person name="Nelson D.L."/>
            <person name="Nelson D.R."/>
            <person name="Nelson K.A."/>
            <person name="Nixon K."/>
            <person name="Nusskern D.R."/>
            <person name="Pacleb J.M."/>
            <person name="Palazzolo M."/>
            <person name="Pittman G.S."/>
            <person name="Pan S."/>
            <person name="Pollard J."/>
            <person name="Puri V."/>
            <person name="Reese M.G."/>
            <person name="Reinert K."/>
            <person name="Remington K."/>
            <person name="Saunders R.D.C."/>
            <person name="Scheeler F."/>
            <person name="Shen H."/>
            <person name="Shue B.C."/>
            <person name="Siden-Kiamos I."/>
            <person name="Simpson M."/>
            <person name="Skupski M.P."/>
            <person name="Smith T.J."/>
            <person name="Spier E."/>
            <person name="Spradling A.C."/>
            <person name="Stapleton M."/>
            <person name="Strong R."/>
            <person name="Sun E."/>
            <person name="Svirskas R."/>
            <person name="Tector C."/>
            <person name="Turner R."/>
            <person name="Venter E."/>
            <person name="Wang A.H."/>
            <person name="Wang X."/>
            <person name="Wang Z.-Y."/>
            <person name="Wassarman D.A."/>
            <person name="Weinstock G.M."/>
            <person name="Weissenbach J."/>
            <person name="Williams S.M."/>
            <person name="Woodage T."/>
            <person name="Worley K.C."/>
            <person name="Wu D."/>
            <person name="Yang S."/>
            <person name="Yao Q.A."/>
            <person name="Ye J."/>
            <person name="Yeh R.-F."/>
            <person name="Zaveri J.S."/>
            <person name="Zhan M."/>
            <person name="Zhang G."/>
            <person name="Zhao Q."/>
            <person name="Zheng L."/>
            <person name="Zheng X.H."/>
            <person name="Zhong F.N."/>
            <person name="Zhong W."/>
            <person name="Zhou X."/>
            <person name="Zhu S.C."/>
            <person name="Zhu X."/>
            <person name="Smith H.O."/>
            <person name="Gibbs R.A."/>
            <person name="Myers E.W."/>
            <person name="Rubin G.M."/>
            <person name="Venter J.C."/>
        </authorList>
    </citation>
    <scope>NUCLEOTIDE SEQUENCE [LARGE SCALE GENOMIC DNA]</scope>
    <source>
        <strain>Berkeley</strain>
    </source>
</reference>
<reference key="3">
    <citation type="journal article" date="2002" name="Genome Biol.">
        <title>Annotation of the Drosophila melanogaster euchromatic genome: a systematic review.</title>
        <authorList>
            <person name="Misra S."/>
            <person name="Crosby M.A."/>
            <person name="Mungall C.J."/>
            <person name="Matthews B.B."/>
            <person name="Campbell K.S."/>
            <person name="Hradecky P."/>
            <person name="Huang Y."/>
            <person name="Kaminker J.S."/>
            <person name="Millburn G.H."/>
            <person name="Prochnik S.E."/>
            <person name="Smith C.D."/>
            <person name="Tupy J.L."/>
            <person name="Whitfield E.J."/>
            <person name="Bayraktaroglu L."/>
            <person name="Berman B.P."/>
            <person name="Bettencourt B.R."/>
            <person name="Celniker S.E."/>
            <person name="de Grey A.D.N.J."/>
            <person name="Drysdale R.A."/>
            <person name="Harris N.L."/>
            <person name="Richter J."/>
            <person name="Russo S."/>
            <person name="Schroeder A.J."/>
            <person name="Shu S.Q."/>
            <person name="Stapleton M."/>
            <person name="Yamada C."/>
            <person name="Ashburner M."/>
            <person name="Gelbart W.M."/>
            <person name="Rubin G.M."/>
            <person name="Lewis S.E."/>
        </authorList>
    </citation>
    <scope>GENOME REANNOTATION</scope>
    <scope>ALTERNATIVE SPLICING</scope>
    <source>
        <strain>Berkeley</strain>
    </source>
</reference>
<reference key="4">
    <citation type="journal article" date="2002" name="Genome Biol.">
        <title>A Drosophila full-length cDNA resource.</title>
        <authorList>
            <person name="Stapleton M."/>
            <person name="Carlson J.W."/>
            <person name="Brokstein P."/>
            <person name="Yu C."/>
            <person name="Champe M."/>
            <person name="George R.A."/>
            <person name="Guarin H."/>
            <person name="Kronmiller B."/>
            <person name="Pacleb J.M."/>
            <person name="Park S."/>
            <person name="Wan K.H."/>
            <person name="Rubin G.M."/>
            <person name="Celniker S.E."/>
        </authorList>
    </citation>
    <scope>NUCLEOTIDE SEQUENCE [LARGE SCALE MRNA] (ISOFORM B)</scope>
    <source>
        <strain>Berkeley</strain>
        <tissue>Embryo</tissue>
    </source>
</reference>
<reference key="5">
    <citation type="journal article" date="2023" name="Sci. Rep.">
        <title>Adult expression of Semaphorins and Plexins is essential for motor neuron survival.</title>
        <authorList>
            <person name="Vaikakkara Chithran A."/>
            <person name="Allan D.W."/>
            <person name="O'Connor T.P."/>
        </authorList>
    </citation>
    <scope>FUNCTION</scope>
    <scope>DISRUPTION PHENOTYPE</scope>
</reference>
<gene>
    <name type="primary">Fas3</name>
    <name type="ORF">CG5803</name>
</gene>